<protein>
    <recommendedName>
        <fullName evidence="1">Acetate kinase</fullName>
        <ecNumber evidence="1">2.7.2.1</ecNumber>
    </recommendedName>
    <alternativeName>
        <fullName evidence="1">Acetokinase</fullName>
    </alternativeName>
</protein>
<name>ACKA_NOCFA</name>
<organism>
    <name type="scientific">Nocardia farcinica (strain IFM 10152)</name>
    <dbReference type="NCBI Taxonomy" id="247156"/>
    <lineage>
        <taxon>Bacteria</taxon>
        <taxon>Bacillati</taxon>
        <taxon>Actinomycetota</taxon>
        <taxon>Actinomycetes</taxon>
        <taxon>Mycobacteriales</taxon>
        <taxon>Nocardiaceae</taxon>
        <taxon>Nocardia</taxon>
    </lineage>
</organism>
<comment type="function">
    <text evidence="1">Catalyzes the formation of acetyl phosphate from acetate and ATP. Can also catalyze the reverse reaction.</text>
</comment>
<comment type="catalytic activity">
    <reaction evidence="1">
        <text>acetate + ATP = acetyl phosphate + ADP</text>
        <dbReference type="Rhea" id="RHEA:11352"/>
        <dbReference type="ChEBI" id="CHEBI:22191"/>
        <dbReference type="ChEBI" id="CHEBI:30089"/>
        <dbReference type="ChEBI" id="CHEBI:30616"/>
        <dbReference type="ChEBI" id="CHEBI:456216"/>
        <dbReference type="EC" id="2.7.2.1"/>
    </reaction>
</comment>
<comment type="cofactor">
    <cofactor evidence="1">
        <name>Mg(2+)</name>
        <dbReference type="ChEBI" id="CHEBI:18420"/>
    </cofactor>
    <cofactor evidence="1">
        <name>Mn(2+)</name>
        <dbReference type="ChEBI" id="CHEBI:29035"/>
    </cofactor>
    <text evidence="1">Mg(2+). Can also accept Mn(2+).</text>
</comment>
<comment type="pathway">
    <text evidence="1">Metabolic intermediate biosynthesis; acetyl-CoA biosynthesis; acetyl-CoA from acetate: step 1/2.</text>
</comment>
<comment type="subunit">
    <text evidence="1">Homodimer.</text>
</comment>
<comment type="subcellular location">
    <subcellularLocation>
        <location evidence="1">Cytoplasm</location>
    </subcellularLocation>
</comment>
<comment type="similarity">
    <text evidence="1">Belongs to the acetokinase family.</text>
</comment>
<reference key="1">
    <citation type="journal article" date="2004" name="Proc. Natl. Acad. Sci. U.S.A.">
        <title>The complete genomic sequence of Nocardia farcinica IFM 10152.</title>
        <authorList>
            <person name="Ishikawa J."/>
            <person name="Yamashita A."/>
            <person name="Mikami Y."/>
            <person name="Hoshino Y."/>
            <person name="Kurita H."/>
            <person name="Hotta K."/>
            <person name="Shiba T."/>
            <person name="Hattori M."/>
        </authorList>
    </citation>
    <scope>NUCLEOTIDE SEQUENCE [LARGE SCALE GENOMIC DNA]</scope>
    <source>
        <strain>IFM 10152</strain>
    </source>
</reference>
<accession>Q5YNP4</accession>
<evidence type="ECO:0000255" key="1">
    <source>
        <dbReference type="HAMAP-Rule" id="MF_00020"/>
    </source>
</evidence>
<dbReference type="EC" id="2.7.2.1" evidence="1"/>
<dbReference type="EMBL" id="AP006618">
    <property type="protein sequence ID" value="BAD60197.1"/>
    <property type="molecule type" value="Genomic_DNA"/>
</dbReference>
<dbReference type="RefSeq" id="WP_011211879.1">
    <property type="nucleotide sequence ID" value="NC_006361.1"/>
</dbReference>
<dbReference type="SMR" id="Q5YNP4"/>
<dbReference type="STRING" id="247156.NFA_53450"/>
<dbReference type="GeneID" id="61135920"/>
<dbReference type="KEGG" id="nfa:NFA_53450"/>
<dbReference type="eggNOG" id="COG0282">
    <property type="taxonomic scope" value="Bacteria"/>
</dbReference>
<dbReference type="HOGENOM" id="CLU_020352_0_1_11"/>
<dbReference type="OrthoDB" id="9802453at2"/>
<dbReference type="UniPathway" id="UPA00340">
    <property type="reaction ID" value="UER00458"/>
</dbReference>
<dbReference type="Proteomes" id="UP000006820">
    <property type="component" value="Chromosome"/>
</dbReference>
<dbReference type="GO" id="GO:0005737">
    <property type="term" value="C:cytoplasm"/>
    <property type="evidence" value="ECO:0007669"/>
    <property type="project" value="UniProtKB-SubCell"/>
</dbReference>
<dbReference type="GO" id="GO:0008776">
    <property type="term" value="F:acetate kinase activity"/>
    <property type="evidence" value="ECO:0007669"/>
    <property type="project" value="UniProtKB-UniRule"/>
</dbReference>
<dbReference type="GO" id="GO:0005524">
    <property type="term" value="F:ATP binding"/>
    <property type="evidence" value="ECO:0007669"/>
    <property type="project" value="UniProtKB-KW"/>
</dbReference>
<dbReference type="GO" id="GO:0000287">
    <property type="term" value="F:magnesium ion binding"/>
    <property type="evidence" value="ECO:0007669"/>
    <property type="project" value="UniProtKB-UniRule"/>
</dbReference>
<dbReference type="GO" id="GO:0006083">
    <property type="term" value="P:acetate metabolic process"/>
    <property type="evidence" value="ECO:0007669"/>
    <property type="project" value="TreeGrafter"/>
</dbReference>
<dbReference type="GO" id="GO:0006085">
    <property type="term" value="P:acetyl-CoA biosynthetic process"/>
    <property type="evidence" value="ECO:0007669"/>
    <property type="project" value="UniProtKB-UniRule"/>
</dbReference>
<dbReference type="CDD" id="cd24010">
    <property type="entry name" value="ASKHA_NBD_AcK_PK"/>
    <property type="match status" value="1"/>
</dbReference>
<dbReference type="Gene3D" id="3.30.420.40">
    <property type="match status" value="2"/>
</dbReference>
<dbReference type="HAMAP" id="MF_00020">
    <property type="entry name" value="Acetate_kinase"/>
    <property type="match status" value="1"/>
</dbReference>
<dbReference type="InterPro" id="IPR004372">
    <property type="entry name" value="Ac/propionate_kinase"/>
</dbReference>
<dbReference type="InterPro" id="IPR000890">
    <property type="entry name" value="Aliphatic_acid_kin_short-chain"/>
</dbReference>
<dbReference type="InterPro" id="IPR023865">
    <property type="entry name" value="Aliphatic_acid_kinase_CS"/>
</dbReference>
<dbReference type="InterPro" id="IPR043129">
    <property type="entry name" value="ATPase_NBD"/>
</dbReference>
<dbReference type="NCBIfam" id="TIGR00016">
    <property type="entry name" value="ackA"/>
    <property type="match status" value="1"/>
</dbReference>
<dbReference type="PANTHER" id="PTHR21060">
    <property type="entry name" value="ACETATE KINASE"/>
    <property type="match status" value="1"/>
</dbReference>
<dbReference type="PANTHER" id="PTHR21060:SF15">
    <property type="entry name" value="ACETATE KINASE-RELATED"/>
    <property type="match status" value="1"/>
</dbReference>
<dbReference type="Pfam" id="PF00871">
    <property type="entry name" value="Acetate_kinase"/>
    <property type="match status" value="1"/>
</dbReference>
<dbReference type="PIRSF" id="PIRSF000722">
    <property type="entry name" value="Acetate_prop_kin"/>
    <property type="match status" value="1"/>
</dbReference>
<dbReference type="PRINTS" id="PR00471">
    <property type="entry name" value="ACETATEKNASE"/>
</dbReference>
<dbReference type="SUPFAM" id="SSF53067">
    <property type="entry name" value="Actin-like ATPase domain"/>
    <property type="match status" value="2"/>
</dbReference>
<dbReference type="PROSITE" id="PS01075">
    <property type="entry name" value="ACETATE_KINASE_1"/>
    <property type="match status" value="1"/>
</dbReference>
<dbReference type="PROSITE" id="PS01076">
    <property type="entry name" value="ACETATE_KINASE_2"/>
    <property type="match status" value="1"/>
</dbReference>
<feature type="chain" id="PRO_0000107594" description="Acetate kinase">
    <location>
        <begin position="1"/>
        <end position="402"/>
    </location>
</feature>
<feature type="active site" description="Proton donor/acceptor" evidence="1">
    <location>
        <position position="151"/>
    </location>
</feature>
<feature type="binding site" evidence="1">
    <location>
        <position position="13"/>
    </location>
    <ligand>
        <name>Mg(2+)</name>
        <dbReference type="ChEBI" id="CHEBI:18420"/>
    </ligand>
</feature>
<feature type="binding site" evidence="1">
    <location>
        <position position="20"/>
    </location>
    <ligand>
        <name>ATP</name>
        <dbReference type="ChEBI" id="CHEBI:30616"/>
    </ligand>
</feature>
<feature type="binding site" evidence="1">
    <location>
        <position position="94"/>
    </location>
    <ligand>
        <name>substrate</name>
    </ligand>
</feature>
<feature type="binding site" evidence="1">
    <location>
        <begin position="211"/>
        <end position="215"/>
    </location>
    <ligand>
        <name>ATP</name>
        <dbReference type="ChEBI" id="CHEBI:30616"/>
    </ligand>
</feature>
<feature type="binding site" evidence="1">
    <location>
        <begin position="285"/>
        <end position="287"/>
    </location>
    <ligand>
        <name>ATP</name>
        <dbReference type="ChEBI" id="CHEBI:30616"/>
    </ligand>
</feature>
<feature type="binding site" evidence="1">
    <location>
        <begin position="333"/>
        <end position="337"/>
    </location>
    <ligand>
        <name>ATP</name>
        <dbReference type="ChEBI" id="CHEBI:30616"/>
    </ligand>
</feature>
<feature type="binding site" evidence="1">
    <location>
        <position position="387"/>
    </location>
    <ligand>
        <name>Mg(2+)</name>
        <dbReference type="ChEBI" id="CHEBI:18420"/>
    </ligand>
</feature>
<feature type="site" description="Transition state stabilizer" evidence="1">
    <location>
        <position position="183"/>
    </location>
</feature>
<feature type="site" description="Transition state stabilizer" evidence="1">
    <location>
        <position position="244"/>
    </location>
</feature>
<gene>
    <name evidence="1" type="primary">ackA</name>
    <name type="ordered locus">NFA_53450</name>
</gene>
<sequence>MTAASEHLVLVLNSGSSSIKYQLVDPETGEVSAAGLVERIGEDDSAIEHRCGARTIGHEGRIPDHRAGLERVFEMFAETGFDLAGAGLRAVGHRVVHGGEMFHEPTLVTDEVVAAIADFAELAPLHNPANVTGIENARRLLPGVPQVAVFDTAFFHGLPDAAKTYAIDAKIAAEYGIRRYGFHGISHEYVSGRVAEVLDLDPARLRQIVFHLGNGASASAVRGGSPIDTSMGLTPLEGLVMGTRGGDLDPGILGHLARAAGFDVDRIDKLLNREAGLKGMAGVNDFRELRRLIDEGDAAAKLAYDVYVHRLRRYLGAYLIALGGVDAITFTAGVGENSADVRADALAGLENFGIAVDPARNTAKDRGARVISPPAAPVTVLVVPTNEELAIARAADRLVAAG</sequence>
<keyword id="KW-0067">ATP-binding</keyword>
<keyword id="KW-0963">Cytoplasm</keyword>
<keyword id="KW-0418">Kinase</keyword>
<keyword id="KW-0460">Magnesium</keyword>
<keyword id="KW-0479">Metal-binding</keyword>
<keyword id="KW-0547">Nucleotide-binding</keyword>
<keyword id="KW-1185">Reference proteome</keyword>
<keyword id="KW-0808">Transferase</keyword>
<proteinExistence type="inferred from homology"/>